<organism>
    <name type="scientific">Brevibacillus brevis</name>
    <name type="common">Bacillus brevis</name>
    <dbReference type="NCBI Taxonomy" id="1393"/>
    <lineage>
        <taxon>Bacteria</taxon>
        <taxon>Bacillati</taxon>
        <taxon>Bacillota</taxon>
        <taxon>Bacilli</taxon>
        <taxon>Bacillales</taxon>
        <taxon>Paenibacillaceae</taxon>
        <taxon>Brevibacillus</taxon>
    </lineage>
</organism>
<accession>P83695</accession>
<proteinExistence type="evidence at protein level"/>
<dbReference type="EC" id="1.16.-.-"/>
<dbReference type="PDB" id="1N1Q">
    <property type="method" value="X-ray"/>
    <property type="resolution" value="2.20 A"/>
    <property type="chains" value="A/B/C/D=1-149"/>
</dbReference>
<dbReference type="PDBsum" id="1N1Q"/>
<dbReference type="SMR" id="P83695"/>
<dbReference type="EvolutionaryTrace" id="P83695"/>
<dbReference type="GO" id="GO:0005737">
    <property type="term" value="C:cytoplasm"/>
    <property type="evidence" value="ECO:0007669"/>
    <property type="project" value="UniProtKB-KW"/>
</dbReference>
<dbReference type="GO" id="GO:0009295">
    <property type="term" value="C:nucleoid"/>
    <property type="evidence" value="ECO:0007669"/>
    <property type="project" value="UniProtKB-SubCell"/>
</dbReference>
<dbReference type="GO" id="GO:0003677">
    <property type="term" value="F:DNA binding"/>
    <property type="evidence" value="ECO:0007669"/>
    <property type="project" value="UniProtKB-KW"/>
</dbReference>
<dbReference type="GO" id="GO:0008199">
    <property type="term" value="F:ferric iron binding"/>
    <property type="evidence" value="ECO:0007669"/>
    <property type="project" value="InterPro"/>
</dbReference>
<dbReference type="GO" id="GO:0016722">
    <property type="term" value="F:oxidoreductase activity, acting on metal ions"/>
    <property type="evidence" value="ECO:0007669"/>
    <property type="project" value="InterPro"/>
</dbReference>
<dbReference type="GO" id="GO:0030261">
    <property type="term" value="P:chromosome condensation"/>
    <property type="evidence" value="ECO:0007669"/>
    <property type="project" value="UniProtKB-KW"/>
</dbReference>
<dbReference type="GO" id="GO:0006879">
    <property type="term" value="P:intracellular iron ion homeostasis"/>
    <property type="evidence" value="ECO:0007669"/>
    <property type="project" value="UniProtKB-KW"/>
</dbReference>
<dbReference type="CDD" id="cd01043">
    <property type="entry name" value="DPS"/>
    <property type="match status" value="1"/>
</dbReference>
<dbReference type="Gene3D" id="1.20.1260.10">
    <property type="match status" value="1"/>
</dbReference>
<dbReference type="InterPro" id="IPR002177">
    <property type="entry name" value="DPS_DNA-bd"/>
</dbReference>
<dbReference type="InterPro" id="IPR023188">
    <property type="entry name" value="DPS_DNA-bd_CS"/>
</dbReference>
<dbReference type="InterPro" id="IPR012347">
    <property type="entry name" value="Ferritin-like"/>
</dbReference>
<dbReference type="InterPro" id="IPR009078">
    <property type="entry name" value="Ferritin-like_SF"/>
</dbReference>
<dbReference type="InterPro" id="IPR008331">
    <property type="entry name" value="Ferritin_DPS_dom"/>
</dbReference>
<dbReference type="PANTHER" id="PTHR42932">
    <property type="entry name" value="GENERAL STRESS PROTEIN 20U"/>
    <property type="match status" value="1"/>
</dbReference>
<dbReference type="PANTHER" id="PTHR42932:SF1">
    <property type="entry name" value="GENERAL STRESS PROTEIN 20U"/>
    <property type="match status" value="1"/>
</dbReference>
<dbReference type="Pfam" id="PF00210">
    <property type="entry name" value="Ferritin"/>
    <property type="match status" value="1"/>
</dbReference>
<dbReference type="PIRSF" id="PIRSF005900">
    <property type="entry name" value="Dps"/>
    <property type="match status" value="1"/>
</dbReference>
<dbReference type="PRINTS" id="PR01346">
    <property type="entry name" value="HELNAPAPROT"/>
</dbReference>
<dbReference type="SUPFAM" id="SSF47240">
    <property type="entry name" value="Ferritin-like"/>
    <property type="match status" value="1"/>
</dbReference>
<dbReference type="PROSITE" id="PS00818">
    <property type="entry name" value="DPS_1"/>
    <property type="match status" value="1"/>
</dbReference>
<dbReference type="PROSITE" id="PS00819">
    <property type="entry name" value="DPS_2"/>
    <property type="match status" value="1"/>
</dbReference>
<sequence>MKTSIQQLVAVLLNRQVANWVVLYVKLHNFHWNVNGPNFFTLHEKFEELYTEASGHIDTLAERVLSIGGSPIATLAASLEEASIKEATGGESAAEMVSSVVNDFVDLVGELKVARDVADEADDEATADMLDAIEAGLEKHVWMLEAFLE</sequence>
<feature type="chain" id="PRO_0000253330" description="DNA protection during starvation protein">
    <location>
        <begin position="1"/>
        <end position="149"/>
    </location>
</feature>
<feature type="binding site" evidence="2">
    <location>
        <position position="31"/>
    </location>
    <ligand>
        <name>Fe cation</name>
        <dbReference type="ChEBI" id="CHEBI:24875"/>
        <label>1</label>
        <note>ligand shared between two dodecameric partners</note>
    </ligand>
</feature>
<feature type="binding site" description="in other chain" evidence="2">
    <location>
        <position position="58"/>
    </location>
    <ligand>
        <name>Fe cation</name>
        <dbReference type="ChEBI" id="CHEBI:24875"/>
        <label>1</label>
        <note>ligand shared between two dodecameric partners</note>
    </ligand>
</feature>
<feature type="binding site" description="in other chain" evidence="2">
    <location>
        <position position="62"/>
    </location>
    <ligand>
        <name>Fe cation</name>
        <dbReference type="ChEBI" id="CHEBI:24875"/>
        <label>1</label>
        <note>ligand shared between two dodecameric partners</note>
    </ligand>
</feature>
<feature type="binding site" evidence="4">
    <location>
        <position position="62"/>
    </location>
    <ligand>
        <name>Fe cation</name>
        <dbReference type="ChEBI" id="CHEBI:24875"/>
        <label>2</label>
    </ligand>
</feature>
<feature type="helix" evidence="5">
    <location>
        <begin position="4"/>
        <end position="33"/>
    </location>
</feature>
<feature type="helix" evidence="5">
    <location>
        <begin position="39"/>
        <end position="66"/>
    </location>
</feature>
<feature type="helix" evidence="5">
    <location>
        <begin position="75"/>
        <end position="81"/>
    </location>
</feature>
<feature type="helix" evidence="5">
    <location>
        <begin position="93"/>
        <end position="120"/>
    </location>
</feature>
<feature type="helix" evidence="5">
    <location>
        <begin position="124"/>
        <end position="148"/>
    </location>
</feature>
<gene>
    <name type="primary">dps</name>
</gene>
<keyword id="KW-0002">3D-structure</keyword>
<keyword id="KW-0963">Cytoplasm</keyword>
<keyword id="KW-0226">DNA condensation</keyword>
<keyword id="KW-0238">DNA-binding</keyword>
<keyword id="KW-0408">Iron</keyword>
<keyword id="KW-0409">Iron storage</keyword>
<keyword id="KW-0479">Metal-binding</keyword>
<keyword id="KW-0560">Oxidoreductase</keyword>
<name>DPS_BREBE</name>
<protein>
    <recommendedName>
        <fullName>DNA protection during starvation protein</fullName>
        <ecNumber>1.16.-.-</ecNumber>
    </recommendedName>
</protein>
<evidence type="ECO:0000250" key="1"/>
<evidence type="ECO:0000269" key="2">
    <source>
    </source>
</evidence>
<evidence type="ECO:0000305" key="3"/>
<evidence type="ECO:0000305" key="4">
    <source>
    </source>
</evidence>
<evidence type="ECO:0007829" key="5">
    <source>
        <dbReference type="PDB" id="1N1Q"/>
    </source>
</evidence>
<comment type="function">
    <text evidence="1">During stationary phase, binds the chromosome non-specifically, forming a highly ordered and stable dps-DNA co-crystal within which chromosomal DNA is condensed and protected from diverse damages. It protects DNA from oxidative damage by sequestering intracellular Fe(2+) ion and storing it in the form of Fe(3+) oxyhydroxide mineral. One hydrogen peroxide oxidizes two Fe(2+) ions, which prevents hydroxyl radical production by the Fenton reaction (By similarity).</text>
</comment>
<comment type="catalytic activity">
    <reaction>
        <text>2 Fe(2+) + H2O2 + 2 H(+) = 2 Fe(3+) + 2 H2O</text>
        <dbReference type="Rhea" id="RHEA:48712"/>
        <dbReference type="ChEBI" id="CHEBI:15377"/>
        <dbReference type="ChEBI" id="CHEBI:15378"/>
        <dbReference type="ChEBI" id="CHEBI:16240"/>
        <dbReference type="ChEBI" id="CHEBI:29033"/>
        <dbReference type="ChEBI" id="CHEBI:29034"/>
    </reaction>
</comment>
<comment type="subunit">
    <text evidence="1 2">The 12 subunits form a hollow sphere into which the mineral iron core of up to 500 Fe(3+) can be deposited (By similarity). Homododecamer.</text>
</comment>
<comment type="subcellular location">
    <subcellularLocation>
        <location evidence="1">Cytoplasm</location>
        <location evidence="1">Nucleoid</location>
    </subcellularLocation>
</comment>
<comment type="domain">
    <text>12 di-nuclear ferroxidase centers are located at the interfaces between subunits related by 2-fold symmetry axes.</text>
</comment>
<comment type="similarity">
    <text evidence="3">Belongs to the Dps family.</text>
</comment>
<reference key="1">
    <citation type="journal article" date="2003" name="J. Mol. Biol.">
        <title>The multi-layered structure of Dps with a novel di-nuclear ferroxidase center.</title>
        <authorList>
            <person name="Ren B."/>
            <person name="Tibbelin G."/>
            <person name="Kajino T."/>
            <person name="Asami O."/>
            <person name="Ladenstein R."/>
        </authorList>
    </citation>
    <scope>X-RAY CRYSTALLOGRAPHY (2.2 ANGSTROMS) IN COMPLEX WITH IRON</scope>
    <scope>SUBUNIT</scope>
</reference>